<reference key="1">
    <citation type="journal article" date="1996" name="Invest. Ophthalmol. Vis. Sci.">
        <title>Molecular cloning of a rhodopsin gene from salamander rods.</title>
        <authorList>
            <person name="Chen N."/>
            <person name="Ma J.X."/>
            <person name="Corson D.W."/>
            <person name="Hazard E.S."/>
            <person name="Crouch R.K."/>
        </authorList>
    </citation>
    <scope>NUCLEOTIDE SEQUENCE [MRNA]</scope>
    <source>
        <tissue>Retina</tissue>
    </source>
</reference>
<accession>Q90245</accession>
<comment type="function">
    <text evidence="1 2">Photoreceptor required for image-forming vision at low light intensity. Required for photoreceptor cell viability after birth (By similarity). Light-induced isomerization of 11-cis to all-trans retinal triggers a conformational change that activates signaling via G-proteins. Subsequent receptor phosphorylation mediates displacement of the bound G-protein alpha subunit by arrestin and terminates signaling (By similarity).</text>
</comment>
<comment type="subcellular location">
    <subcellularLocation>
        <location evidence="2">Membrane</location>
        <topology evidence="2">Multi-pass membrane protein</topology>
    </subcellularLocation>
    <subcellularLocation>
        <location evidence="2">Cell projection</location>
        <location evidence="2">Cilium</location>
        <location evidence="2">Photoreceptor outer segment</location>
    </subcellularLocation>
    <text evidence="2">Synthesized in the inner segment (IS) of rod photoreceptor cells before vectorial transport to disk membranes in the rod outer segment (OS) photosensory cilia.</text>
</comment>
<comment type="PTM">
    <text evidence="1">Contains one covalently linked retinal chromophore. Upon light absorption, the covalently bound 11-cis-retinal is converted to all-trans-retinal. After hydrolysis of the Schiff base and release of the covalently bound all-trans-retinal, active rhodopsin is regenerated by binding of a fresh molecule of 11-cis-retinal.</text>
</comment>
<comment type="similarity">
    <text evidence="4">Belongs to the G-protein coupled receptor 1 family. Opsin subfamily.</text>
</comment>
<feature type="chain" id="PRO_0000197645" description="Rhodopsin">
    <location>
        <begin position="1"/>
        <end position="354"/>
    </location>
</feature>
<feature type="topological domain" description="Extracellular" evidence="6">
    <location>
        <begin position="1"/>
        <end position="36"/>
    </location>
</feature>
<feature type="transmembrane region" description="Helical; Name=1" evidence="1">
    <location>
        <begin position="37"/>
        <end position="61"/>
    </location>
</feature>
<feature type="topological domain" description="Cytoplasmic" evidence="6">
    <location>
        <begin position="62"/>
        <end position="73"/>
    </location>
</feature>
<feature type="transmembrane region" description="Helical; Name=2" evidence="1">
    <location>
        <begin position="74"/>
        <end position="96"/>
    </location>
</feature>
<feature type="topological domain" description="Extracellular" evidence="6">
    <location>
        <begin position="97"/>
        <end position="110"/>
    </location>
</feature>
<feature type="transmembrane region" description="Helical; Name=3" evidence="1">
    <location>
        <begin position="111"/>
        <end position="133"/>
    </location>
</feature>
<feature type="topological domain" description="Cytoplasmic" evidence="6">
    <location>
        <begin position="134"/>
        <end position="152"/>
    </location>
</feature>
<feature type="transmembrane region" description="Helical; Name=4" evidence="1">
    <location>
        <begin position="153"/>
        <end position="173"/>
    </location>
</feature>
<feature type="topological domain" description="Extracellular" evidence="6">
    <location>
        <begin position="174"/>
        <end position="202"/>
    </location>
</feature>
<feature type="transmembrane region" description="Helical; Name=5" evidence="1">
    <location>
        <begin position="203"/>
        <end position="224"/>
    </location>
</feature>
<feature type="topological domain" description="Cytoplasmic" evidence="6">
    <location>
        <begin position="225"/>
        <end position="252"/>
    </location>
</feature>
<feature type="transmembrane region" description="Helical; Name=6" evidence="1">
    <location>
        <begin position="253"/>
        <end position="274"/>
    </location>
</feature>
<feature type="topological domain" description="Extracellular" evidence="6">
    <location>
        <begin position="275"/>
        <end position="286"/>
    </location>
</feature>
<feature type="transmembrane region" description="Helical; Name=7" evidence="1">
    <location>
        <begin position="287"/>
        <end position="308"/>
    </location>
</feature>
<feature type="topological domain" description="Cytoplasmic" evidence="6">
    <location>
        <begin position="309"/>
        <end position="354"/>
    </location>
</feature>
<feature type="region of interest" description="Disordered" evidence="5">
    <location>
        <begin position="332"/>
        <end position="354"/>
    </location>
</feature>
<feature type="short sequence motif" description="'Ionic lock' involved in activated form stabilization" evidence="1">
    <location>
        <begin position="134"/>
        <end position="136"/>
    </location>
</feature>
<feature type="compositionally biased region" description="Low complexity" evidence="5">
    <location>
        <begin position="334"/>
        <end position="354"/>
    </location>
</feature>
<feature type="site" description="Plays an important role in the conformation switch to the active conformation" evidence="1">
    <location>
        <position position="113"/>
    </location>
</feature>
<feature type="modified residue" description="N6-(retinylidene)lysine" evidence="1">
    <location>
        <position position="296"/>
    </location>
</feature>
<feature type="lipid moiety-binding region" description="S-palmitoyl cysteine" evidence="1">
    <location>
        <position position="322"/>
    </location>
</feature>
<feature type="lipid moiety-binding region" description="S-palmitoyl cysteine" evidence="1">
    <location>
        <position position="323"/>
    </location>
</feature>
<feature type="glycosylation site" description="N-linked (GlcNAc...) asparagine" evidence="3">
    <location>
        <position position="2"/>
    </location>
</feature>
<feature type="glycosylation site" description="N-linked (GlcNAc...) asparagine" evidence="3">
    <location>
        <position position="15"/>
    </location>
</feature>
<feature type="disulfide bond" evidence="4">
    <location>
        <begin position="110"/>
        <end position="187"/>
    </location>
</feature>
<protein>
    <recommendedName>
        <fullName>Rhodopsin</fullName>
    </recommendedName>
</protein>
<proteinExistence type="evidence at transcript level"/>
<sequence>MNGTEGPNFYVPFSNKSGVVRSPFEYPQYYLAEPWQYSVLAAYMFLLILLGFPVNFLTLYVTIQHKKLRTPLNYILLNLAFANHFMVFGGFPVTMYSSMHGYFVFGQTGCYIEGFFATMGGEIALWSLVVLAIERYVVVCKPMSNFRFGENHAIMGVMMTWIMALACAAPPLFGWSRYIPEGMQCSCGVDYYTLKPEVNNESFVIYMFLVHFTIPLMIIFFCYGRLVCTVKEAAAQQQESATTQKAEKEVTRMVIIMVVAFLICWVPYASVAFYIFSNQGTDFGPIFMTVPAFFAKSSAIYNPVIYIVLNKQFRNCMITTICCGKNPFGDDETTSAATSKTEASSVSSSQVSPA</sequence>
<name>OPSD_AMBTI</name>
<gene>
    <name type="primary">RHO</name>
</gene>
<keyword id="KW-0966">Cell projection</keyword>
<keyword id="KW-0157">Chromophore</keyword>
<keyword id="KW-1015">Disulfide bond</keyword>
<keyword id="KW-0297">G-protein coupled receptor</keyword>
<keyword id="KW-0325">Glycoprotein</keyword>
<keyword id="KW-0449">Lipoprotein</keyword>
<keyword id="KW-0472">Membrane</keyword>
<keyword id="KW-0564">Palmitate</keyword>
<keyword id="KW-0597">Phosphoprotein</keyword>
<keyword id="KW-0600">Photoreceptor protein</keyword>
<keyword id="KW-0675">Receptor</keyword>
<keyword id="KW-0681">Retinal protein</keyword>
<keyword id="KW-0716">Sensory transduction</keyword>
<keyword id="KW-0807">Transducer</keyword>
<keyword id="KW-0812">Transmembrane</keyword>
<keyword id="KW-1133">Transmembrane helix</keyword>
<keyword id="KW-0844">Vision</keyword>
<organism>
    <name type="scientific">Ambystoma tigrinum</name>
    <name type="common">Eastern tiger salamander</name>
    <dbReference type="NCBI Taxonomy" id="8305"/>
    <lineage>
        <taxon>Eukaryota</taxon>
        <taxon>Metazoa</taxon>
        <taxon>Chordata</taxon>
        <taxon>Craniata</taxon>
        <taxon>Vertebrata</taxon>
        <taxon>Euteleostomi</taxon>
        <taxon>Amphibia</taxon>
        <taxon>Batrachia</taxon>
        <taxon>Caudata</taxon>
        <taxon>Salamandroidea</taxon>
        <taxon>Ambystomatidae</taxon>
        <taxon>Ambystoma</taxon>
    </lineage>
</organism>
<evidence type="ECO:0000250" key="1">
    <source>
        <dbReference type="UniProtKB" id="P02699"/>
    </source>
</evidence>
<evidence type="ECO:0000250" key="2">
    <source>
        <dbReference type="UniProtKB" id="P08100"/>
    </source>
</evidence>
<evidence type="ECO:0000255" key="3"/>
<evidence type="ECO:0000255" key="4">
    <source>
        <dbReference type="PROSITE-ProRule" id="PRU00521"/>
    </source>
</evidence>
<evidence type="ECO:0000256" key="5">
    <source>
        <dbReference type="SAM" id="MobiDB-lite"/>
    </source>
</evidence>
<evidence type="ECO:0000305" key="6"/>
<dbReference type="EMBL" id="U36574">
    <property type="protein sequence ID" value="AAB08979.1"/>
    <property type="molecule type" value="mRNA"/>
</dbReference>
<dbReference type="SMR" id="Q90245"/>
<dbReference type="GlyCosmos" id="Q90245">
    <property type="glycosylation" value="2 sites, No reported glycans"/>
</dbReference>
<dbReference type="GO" id="GO:0016020">
    <property type="term" value="C:membrane"/>
    <property type="evidence" value="ECO:0000250"/>
    <property type="project" value="UniProtKB"/>
</dbReference>
<dbReference type="GO" id="GO:0097381">
    <property type="term" value="C:photoreceptor disc membrane"/>
    <property type="evidence" value="ECO:0000250"/>
    <property type="project" value="UniProtKB"/>
</dbReference>
<dbReference type="GO" id="GO:0005886">
    <property type="term" value="C:plasma membrane"/>
    <property type="evidence" value="ECO:0000250"/>
    <property type="project" value="UniProtKB"/>
</dbReference>
<dbReference type="GO" id="GO:0005502">
    <property type="term" value="F:11-cis retinal binding"/>
    <property type="evidence" value="ECO:0000250"/>
    <property type="project" value="UniProtKB"/>
</dbReference>
<dbReference type="GO" id="GO:0008020">
    <property type="term" value="F:G protein-coupled photoreceptor activity"/>
    <property type="evidence" value="ECO:0000250"/>
    <property type="project" value="UniProtKB"/>
</dbReference>
<dbReference type="GO" id="GO:0016038">
    <property type="term" value="P:absorption of visible light"/>
    <property type="evidence" value="ECO:0000250"/>
    <property type="project" value="UniProtKB"/>
</dbReference>
<dbReference type="GO" id="GO:0016056">
    <property type="term" value="P:G protein-coupled opsin signaling pathway"/>
    <property type="evidence" value="ECO:0000250"/>
    <property type="project" value="UniProtKB"/>
</dbReference>
<dbReference type="GO" id="GO:0007601">
    <property type="term" value="P:visual perception"/>
    <property type="evidence" value="ECO:0007669"/>
    <property type="project" value="UniProtKB-KW"/>
</dbReference>
<dbReference type="CDD" id="cd15080">
    <property type="entry name" value="7tmA_MWS_opsin"/>
    <property type="match status" value="1"/>
</dbReference>
<dbReference type="FunFam" id="1.20.1070.10:FF:000018">
    <property type="entry name" value="Rhodopsin"/>
    <property type="match status" value="1"/>
</dbReference>
<dbReference type="Gene3D" id="1.20.1070.10">
    <property type="entry name" value="Rhodopsin 7-helix transmembrane proteins"/>
    <property type="match status" value="1"/>
</dbReference>
<dbReference type="InterPro" id="IPR050125">
    <property type="entry name" value="GPCR_opsins"/>
</dbReference>
<dbReference type="InterPro" id="IPR000276">
    <property type="entry name" value="GPCR_Rhodpsn"/>
</dbReference>
<dbReference type="InterPro" id="IPR017452">
    <property type="entry name" value="GPCR_Rhodpsn_7TM"/>
</dbReference>
<dbReference type="InterPro" id="IPR001760">
    <property type="entry name" value="Opsin"/>
</dbReference>
<dbReference type="InterPro" id="IPR027430">
    <property type="entry name" value="Retinal_BS"/>
</dbReference>
<dbReference type="InterPro" id="IPR000732">
    <property type="entry name" value="Rhodopsin"/>
</dbReference>
<dbReference type="InterPro" id="IPR019477">
    <property type="entry name" value="Rhodopsin_N"/>
</dbReference>
<dbReference type="PANTHER" id="PTHR24240">
    <property type="entry name" value="OPSIN"/>
    <property type="match status" value="1"/>
</dbReference>
<dbReference type="Pfam" id="PF00001">
    <property type="entry name" value="7tm_1"/>
    <property type="match status" value="1"/>
</dbReference>
<dbReference type="Pfam" id="PF10413">
    <property type="entry name" value="Rhodopsin_N"/>
    <property type="match status" value="1"/>
</dbReference>
<dbReference type="PRINTS" id="PR00237">
    <property type="entry name" value="GPCRRHODOPSN"/>
</dbReference>
<dbReference type="PRINTS" id="PR00238">
    <property type="entry name" value="OPSIN"/>
</dbReference>
<dbReference type="PRINTS" id="PR00579">
    <property type="entry name" value="RHODOPSIN"/>
</dbReference>
<dbReference type="SUPFAM" id="SSF81321">
    <property type="entry name" value="Family A G protein-coupled receptor-like"/>
    <property type="match status" value="1"/>
</dbReference>
<dbReference type="PROSITE" id="PS00237">
    <property type="entry name" value="G_PROTEIN_RECEP_F1_1"/>
    <property type="match status" value="1"/>
</dbReference>
<dbReference type="PROSITE" id="PS50262">
    <property type="entry name" value="G_PROTEIN_RECEP_F1_2"/>
    <property type="match status" value="1"/>
</dbReference>
<dbReference type="PROSITE" id="PS00238">
    <property type="entry name" value="OPSIN"/>
    <property type="match status" value="1"/>
</dbReference>